<comment type="function">
    <text evidence="1">This is one of the proteins that bind and probably mediate the attachment of the 5S RNA into the large ribosomal subunit, where it forms part of the central protuberance. In the 70S ribosome it contacts protein S13 of the 30S subunit (bridge B1b), connecting the 2 subunits; this bridge is implicated in subunit movement. Contacts the P site tRNA; the 5S rRNA and some of its associated proteins might help stabilize positioning of ribosome-bound tRNAs.</text>
</comment>
<comment type="subunit">
    <text evidence="1">Part of the 50S ribosomal subunit; part of the 5S rRNA/L5/L18/L25 subcomplex. Contacts the 5S rRNA and the P site tRNA. Forms a bridge to the 30S subunit in the 70S ribosome.</text>
</comment>
<comment type="similarity">
    <text evidence="1">Belongs to the universal ribosomal protein uL5 family.</text>
</comment>
<feature type="chain" id="PRO_1000142392" description="Large ribosomal subunit protein uL5">
    <location>
        <begin position="1"/>
        <end position="179"/>
    </location>
</feature>
<protein>
    <recommendedName>
        <fullName evidence="1">Large ribosomal subunit protein uL5</fullName>
    </recommendedName>
    <alternativeName>
        <fullName evidence="2">50S ribosomal protein L5</fullName>
    </alternativeName>
</protein>
<gene>
    <name evidence="1" type="primary">rplE</name>
    <name type="ordered locus">Dtur_0993</name>
</gene>
<proteinExistence type="inferred from homology"/>
<dbReference type="EMBL" id="CP001251">
    <property type="protein sequence ID" value="ACK42273.1"/>
    <property type="molecule type" value="Genomic_DNA"/>
</dbReference>
<dbReference type="RefSeq" id="WP_012583357.1">
    <property type="nucleotide sequence ID" value="NC_011661.1"/>
</dbReference>
<dbReference type="RefSeq" id="YP_002352887.1">
    <property type="nucleotide sequence ID" value="NC_011661.1"/>
</dbReference>
<dbReference type="SMR" id="B8E1E5"/>
<dbReference type="FunCoup" id="B8E1E5">
    <property type="interactions" value="391"/>
</dbReference>
<dbReference type="STRING" id="515635.Dtur_0993"/>
<dbReference type="EnsemblBacteria" id="ACK42273">
    <property type="protein sequence ID" value="ACK42273"/>
    <property type="gene ID" value="Dtur_0993"/>
</dbReference>
<dbReference type="KEGG" id="dtu:Dtur_0993"/>
<dbReference type="PATRIC" id="fig|515635.4.peg.1030"/>
<dbReference type="eggNOG" id="COG0094">
    <property type="taxonomic scope" value="Bacteria"/>
</dbReference>
<dbReference type="HOGENOM" id="CLU_061015_2_1_0"/>
<dbReference type="InParanoid" id="B8E1E5"/>
<dbReference type="OrthoDB" id="9806626at2"/>
<dbReference type="Proteomes" id="UP000007719">
    <property type="component" value="Chromosome"/>
</dbReference>
<dbReference type="GO" id="GO:0022625">
    <property type="term" value="C:cytosolic large ribosomal subunit"/>
    <property type="evidence" value="ECO:0000318"/>
    <property type="project" value="GO_Central"/>
</dbReference>
<dbReference type="GO" id="GO:0003723">
    <property type="term" value="F:RNA binding"/>
    <property type="evidence" value="ECO:0000318"/>
    <property type="project" value="GO_Central"/>
</dbReference>
<dbReference type="GO" id="GO:0019843">
    <property type="term" value="F:rRNA binding"/>
    <property type="evidence" value="ECO:0007669"/>
    <property type="project" value="UniProtKB-UniRule"/>
</dbReference>
<dbReference type="GO" id="GO:0003735">
    <property type="term" value="F:structural constituent of ribosome"/>
    <property type="evidence" value="ECO:0000318"/>
    <property type="project" value="GO_Central"/>
</dbReference>
<dbReference type="GO" id="GO:0000049">
    <property type="term" value="F:tRNA binding"/>
    <property type="evidence" value="ECO:0007669"/>
    <property type="project" value="UniProtKB-UniRule"/>
</dbReference>
<dbReference type="GO" id="GO:0006412">
    <property type="term" value="P:translation"/>
    <property type="evidence" value="ECO:0000318"/>
    <property type="project" value="GO_Central"/>
</dbReference>
<dbReference type="FunFam" id="3.30.1440.10:FF:000001">
    <property type="entry name" value="50S ribosomal protein L5"/>
    <property type="match status" value="1"/>
</dbReference>
<dbReference type="Gene3D" id="3.30.1440.10">
    <property type="match status" value="1"/>
</dbReference>
<dbReference type="HAMAP" id="MF_01333_B">
    <property type="entry name" value="Ribosomal_uL5_B"/>
    <property type="match status" value="1"/>
</dbReference>
<dbReference type="InterPro" id="IPR002132">
    <property type="entry name" value="Ribosomal_uL5"/>
</dbReference>
<dbReference type="InterPro" id="IPR020930">
    <property type="entry name" value="Ribosomal_uL5_bac-type"/>
</dbReference>
<dbReference type="InterPro" id="IPR031309">
    <property type="entry name" value="Ribosomal_uL5_C"/>
</dbReference>
<dbReference type="InterPro" id="IPR022803">
    <property type="entry name" value="Ribosomal_uL5_dom_sf"/>
</dbReference>
<dbReference type="InterPro" id="IPR031310">
    <property type="entry name" value="Ribosomal_uL5_N"/>
</dbReference>
<dbReference type="NCBIfam" id="NF000585">
    <property type="entry name" value="PRK00010.1"/>
    <property type="match status" value="1"/>
</dbReference>
<dbReference type="PANTHER" id="PTHR11994">
    <property type="entry name" value="60S RIBOSOMAL PROTEIN L11-RELATED"/>
    <property type="match status" value="1"/>
</dbReference>
<dbReference type="Pfam" id="PF00281">
    <property type="entry name" value="Ribosomal_L5"/>
    <property type="match status" value="1"/>
</dbReference>
<dbReference type="Pfam" id="PF00673">
    <property type="entry name" value="Ribosomal_L5_C"/>
    <property type="match status" value="1"/>
</dbReference>
<dbReference type="PIRSF" id="PIRSF002161">
    <property type="entry name" value="Ribosomal_L5"/>
    <property type="match status" value="1"/>
</dbReference>
<dbReference type="SUPFAM" id="SSF55282">
    <property type="entry name" value="RL5-like"/>
    <property type="match status" value="1"/>
</dbReference>
<accession>B8E1E5</accession>
<name>RL5_DICTD</name>
<reference key="1">
    <citation type="journal article" date="2016" name="Front. Microbiol.">
        <title>The complete genome sequence of hyperthermophile Dictyoglomus turgidum DSM 6724 reveals a specialized carbohydrate fermentor.</title>
        <authorList>
            <person name="Brumm P.J."/>
            <person name="Gowda K."/>
            <person name="Robb F.T."/>
            <person name="Mead D.A."/>
        </authorList>
    </citation>
    <scope>NUCLEOTIDE SEQUENCE [LARGE SCALE GENOMIC DNA]</scope>
    <source>
        <strain>DSM 6724 / Z-1310</strain>
    </source>
</reference>
<sequence length="179" mass="20136">MEVLREKYIKEVVPAMMRKFGYKNPMAVPKIEKIVVNIGVSEAVQNPGAIEAAARDLAIITGQKPIVRKARKSIANFHLRKGMPIGLKVTLRGERMYAFLYKLINLALPRVRDFSGVSPNSFDGRGNYSLGLKEQLVFPEIEYDKIDRIRGMDITIVTTAKTDEEAKELLALLGMPFKK</sequence>
<evidence type="ECO:0000255" key="1">
    <source>
        <dbReference type="HAMAP-Rule" id="MF_01333"/>
    </source>
</evidence>
<evidence type="ECO:0000305" key="2"/>
<keyword id="KW-1185">Reference proteome</keyword>
<keyword id="KW-0687">Ribonucleoprotein</keyword>
<keyword id="KW-0689">Ribosomal protein</keyword>
<keyword id="KW-0694">RNA-binding</keyword>
<keyword id="KW-0699">rRNA-binding</keyword>
<keyword id="KW-0820">tRNA-binding</keyword>
<organism>
    <name type="scientific">Dictyoglomus turgidum (strain DSM 6724 / Z-1310)</name>
    <dbReference type="NCBI Taxonomy" id="515635"/>
    <lineage>
        <taxon>Bacteria</taxon>
        <taxon>Pseudomonadati</taxon>
        <taxon>Dictyoglomota</taxon>
        <taxon>Dictyoglomia</taxon>
        <taxon>Dictyoglomales</taxon>
        <taxon>Dictyoglomaceae</taxon>
        <taxon>Dictyoglomus</taxon>
    </lineage>
</organism>